<dbReference type="EC" id="5.3.1.16" evidence="1"/>
<dbReference type="EMBL" id="CP001052">
    <property type="protein sequence ID" value="ACD17945.1"/>
    <property type="molecule type" value="Genomic_DNA"/>
</dbReference>
<dbReference type="RefSeq" id="WP_012434504.1">
    <property type="nucleotide sequence ID" value="NC_010681.1"/>
</dbReference>
<dbReference type="SMR" id="B2SZ60"/>
<dbReference type="STRING" id="398527.Bphyt_3555"/>
<dbReference type="GeneID" id="97311079"/>
<dbReference type="KEGG" id="bpy:Bphyt_3555"/>
<dbReference type="eggNOG" id="COG0106">
    <property type="taxonomic scope" value="Bacteria"/>
</dbReference>
<dbReference type="HOGENOM" id="CLU_048577_1_1_4"/>
<dbReference type="OrthoDB" id="9807749at2"/>
<dbReference type="UniPathway" id="UPA00031">
    <property type="reaction ID" value="UER00009"/>
</dbReference>
<dbReference type="Proteomes" id="UP000001739">
    <property type="component" value="Chromosome 1"/>
</dbReference>
<dbReference type="GO" id="GO:0005737">
    <property type="term" value="C:cytoplasm"/>
    <property type="evidence" value="ECO:0007669"/>
    <property type="project" value="UniProtKB-SubCell"/>
</dbReference>
<dbReference type="GO" id="GO:0003949">
    <property type="term" value="F:1-(5-phosphoribosyl)-5-[(5-phosphoribosylamino)methylideneamino]imidazole-4-carboxamide isomerase activity"/>
    <property type="evidence" value="ECO:0007669"/>
    <property type="project" value="UniProtKB-UniRule"/>
</dbReference>
<dbReference type="GO" id="GO:0000105">
    <property type="term" value="P:L-histidine biosynthetic process"/>
    <property type="evidence" value="ECO:0007669"/>
    <property type="project" value="UniProtKB-UniRule"/>
</dbReference>
<dbReference type="GO" id="GO:0000162">
    <property type="term" value="P:L-tryptophan biosynthetic process"/>
    <property type="evidence" value="ECO:0007669"/>
    <property type="project" value="TreeGrafter"/>
</dbReference>
<dbReference type="CDD" id="cd04732">
    <property type="entry name" value="HisA"/>
    <property type="match status" value="1"/>
</dbReference>
<dbReference type="FunFam" id="3.20.20.70:FF:000009">
    <property type="entry name" value="1-(5-phosphoribosyl)-5-[(5-phosphoribosylamino)methylideneamino] imidazole-4-carboxamide isomerase"/>
    <property type="match status" value="1"/>
</dbReference>
<dbReference type="Gene3D" id="3.20.20.70">
    <property type="entry name" value="Aldolase class I"/>
    <property type="match status" value="1"/>
</dbReference>
<dbReference type="HAMAP" id="MF_01014">
    <property type="entry name" value="HisA"/>
    <property type="match status" value="1"/>
</dbReference>
<dbReference type="InterPro" id="IPR013785">
    <property type="entry name" value="Aldolase_TIM"/>
</dbReference>
<dbReference type="InterPro" id="IPR006062">
    <property type="entry name" value="His_biosynth"/>
</dbReference>
<dbReference type="InterPro" id="IPR006063">
    <property type="entry name" value="HisA_bact_arch"/>
</dbReference>
<dbReference type="InterPro" id="IPR044524">
    <property type="entry name" value="Isoase_HisA-like"/>
</dbReference>
<dbReference type="InterPro" id="IPR023016">
    <property type="entry name" value="Isoase_HisA-like_bact"/>
</dbReference>
<dbReference type="InterPro" id="IPR011060">
    <property type="entry name" value="RibuloseP-bd_barrel"/>
</dbReference>
<dbReference type="NCBIfam" id="TIGR00007">
    <property type="entry name" value="1-(5-phosphoribosyl)-5-[(5-phosphoribosylamino)methylideneamino]imidazole-4-carboxamide isomerase"/>
    <property type="match status" value="1"/>
</dbReference>
<dbReference type="NCBIfam" id="NF010112">
    <property type="entry name" value="PRK13585.1"/>
    <property type="match status" value="1"/>
</dbReference>
<dbReference type="PANTHER" id="PTHR43090">
    <property type="entry name" value="1-(5-PHOSPHORIBOSYL)-5-[(5-PHOSPHORIBOSYLAMINO)METHYLIDENEAMINO] IMIDAZOLE-4-CARBOXAMIDE ISOMERASE"/>
    <property type="match status" value="1"/>
</dbReference>
<dbReference type="PANTHER" id="PTHR43090:SF2">
    <property type="entry name" value="1-(5-PHOSPHORIBOSYL)-5-[(5-PHOSPHORIBOSYLAMINO)METHYLIDENEAMINO] IMIDAZOLE-4-CARBOXAMIDE ISOMERASE"/>
    <property type="match status" value="1"/>
</dbReference>
<dbReference type="Pfam" id="PF00977">
    <property type="entry name" value="His_biosynth"/>
    <property type="match status" value="1"/>
</dbReference>
<dbReference type="SUPFAM" id="SSF51366">
    <property type="entry name" value="Ribulose-phoshate binding barrel"/>
    <property type="match status" value="1"/>
</dbReference>
<name>HIS4_PARPJ</name>
<keyword id="KW-0028">Amino-acid biosynthesis</keyword>
<keyword id="KW-0963">Cytoplasm</keyword>
<keyword id="KW-0368">Histidine biosynthesis</keyword>
<keyword id="KW-0413">Isomerase</keyword>
<feature type="chain" id="PRO_1000135091" description="1-(5-phosphoribosyl)-5-[(5-phosphoribosylamino)methylideneamino] imidazole-4-carboxamide isomerase">
    <location>
        <begin position="1"/>
        <end position="250"/>
    </location>
</feature>
<feature type="active site" description="Proton acceptor" evidence="1">
    <location>
        <position position="8"/>
    </location>
</feature>
<feature type="active site" description="Proton donor" evidence="1">
    <location>
        <position position="131"/>
    </location>
</feature>
<evidence type="ECO:0000255" key="1">
    <source>
        <dbReference type="HAMAP-Rule" id="MF_01014"/>
    </source>
</evidence>
<organism>
    <name type="scientific">Paraburkholderia phytofirmans (strain DSM 17436 / LMG 22146 / PsJN)</name>
    <name type="common">Burkholderia phytofirmans</name>
    <dbReference type="NCBI Taxonomy" id="398527"/>
    <lineage>
        <taxon>Bacteria</taxon>
        <taxon>Pseudomonadati</taxon>
        <taxon>Pseudomonadota</taxon>
        <taxon>Betaproteobacteria</taxon>
        <taxon>Burkholderiales</taxon>
        <taxon>Burkholderiaceae</taxon>
        <taxon>Paraburkholderia</taxon>
    </lineage>
</organism>
<proteinExistence type="inferred from homology"/>
<sequence length="250" mass="26784">MLLIPAIDLKDGQCVRLKQGDMDQATIFSEEPAAMARHWVDRGARRLHLVDLNGAFAGKPKNEDAIRAIIEEVGGEIPVQLGGGIRDLNTIERYLDDGLSYVIIGTAAVKNPGFLQDACTAFGGHIIVGLDAKDGKVATDGWSKLTGHEVADLARKFEDYGCESIIYTDIGRDGMLQGINIEATVRLARAVKIPVIASGGLSNLTDIESLCEVEDEGIEGVICGRAIYSGDLDFAAAQTLADRLRESDDA</sequence>
<comment type="catalytic activity">
    <reaction evidence="1">
        <text>1-(5-phospho-beta-D-ribosyl)-5-[(5-phospho-beta-D-ribosylamino)methylideneamino]imidazole-4-carboxamide = 5-[(5-phospho-1-deoxy-D-ribulos-1-ylimino)methylamino]-1-(5-phospho-beta-D-ribosyl)imidazole-4-carboxamide</text>
        <dbReference type="Rhea" id="RHEA:15469"/>
        <dbReference type="ChEBI" id="CHEBI:58435"/>
        <dbReference type="ChEBI" id="CHEBI:58525"/>
        <dbReference type="EC" id="5.3.1.16"/>
    </reaction>
</comment>
<comment type="pathway">
    <text evidence="1">Amino-acid biosynthesis; L-histidine biosynthesis; L-histidine from 5-phospho-alpha-D-ribose 1-diphosphate: step 4/9.</text>
</comment>
<comment type="subcellular location">
    <subcellularLocation>
        <location evidence="1">Cytoplasm</location>
    </subcellularLocation>
</comment>
<comment type="similarity">
    <text evidence="1">Belongs to the HisA/HisF family.</text>
</comment>
<accession>B2SZ60</accession>
<reference key="1">
    <citation type="journal article" date="2011" name="J. Bacteriol.">
        <title>Complete genome sequence of the plant growth-promoting endophyte Burkholderia phytofirmans strain PsJN.</title>
        <authorList>
            <person name="Weilharter A."/>
            <person name="Mitter B."/>
            <person name="Shin M.V."/>
            <person name="Chain P.S."/>
            <person name="Nowak J."/>
            <person name="Sessitsch A."/>
        </authorList>
    </citation>
    <scope>NUCLEOTIDE SEQUENCE [LARGE SCALE GENOMIC DNA]</scope>
    <source>
        <strain>DSM 17436 / LMG 22146 / PsJN</strain>
    </source>
</reference>
<gene>
    <name evidence="1" type="primary">hisA</name>
    <name type="ordered locus">Bphyt_3555</name>
</gene>
<protein>
    <recommendedName>
        <fullName evidence="1">1-(5-phosphoribosyl)-5-[(5-phosphoribosylamino)methylideneamino] imidazole-4-carboxamide isomerase</fullName>
        <ecNumber evidence="1">5.3.1.16</ecNumber>
    </recommendedName>
    <alternativeName>
        <fullName evidence="1">Phosphoribosylformimino-5-aminoimidazole carboxamide ribotide isomerase</fullName>
    </alternativeName>
</protein>